<organism>
    <name type="scientific">Rickettsia rickettsii (strain Sheila Smith)</name>
    <dbReference type="NCBI Taxonomy" id="392021"/>
    <lineage>
        <taxon>Bacteria</taxon>
        <taxon>Pseudomonadati</taxon>
        <taxon>Pseudomonadota</taxon>
        <taxon>Alphaproteobacteria</taxon>
        <taxon>Rickettsiales</taxon>
        <taxon>Rickettsiaceae</taxon>
        <taxon>Rickettsieae</taxon>
        <taxon>Rickettsia</taxon>
        <taxon>spotted fever group</taxon>
    </lineage>
</organism>
<protein>
    <recommendedName>
        <fullName evidence="1">Large ribosomal subunit protein uL18</fullName>
    </recommendedName>
    <alternativeName>
        <fullName evidence="2">50S ribosomal protein L18</fullName>
    </alternativeName>
</protein>
<reference key="1">
    <citation type="submission" date="2007-09" db="EMBL/GenBank/DDBJ databases">
        <title>Complete genome sequence of Rickettsia rickettsii.</title>
        <authorList>
            <person name="Madan A."/>
            <person name="Fahey J."/>
            <person name="Helton E."/>
            <person name="Ketteman M."/>
            <person name="Madan A."/>
            <person name="Rodrigues S."/>
            <person name="Sanchez A."/>
            <person name="Dasch G."/>
            <person name="Eremeeva M."/>
        </authorList>
    </citation>
    <scope>NUCLEOTIDE SEQUENCE [LARGE SCALE GENOMIC DNA]</scope>
    <source>
        <strain>Sheila Smith</strain>
    </source>
</reference>
<name>RL18_RICRS</name>
<evidence type="ECO:0000255" key="1">
    <source>
        <dbReference type="HAMAP-Rule" id="MF_01337"/>
    </source>
</evidence>
<evidence type="ECO:0000305" key="2"/>
<dbReference type="EMBL" id="CP000848">
    <property type="protein sequence ID" value="ABV76578.1"/>
    <property type="molecule type" value="Genomic_DNA"/>
</dbReference>
<dbReference type="RefSeq" id="WP_012151141.1">
    <property type="nucleotide sequence ID" value="NZ_CP121767.1"/>
</dbReference>
<dbReference type="SMR" id="A8GT53"/>
<dbReference type="GeneID" id="79937654"/>
<dbReference type="KEGG" id="rri:A1G_05475"/>
<dbReference type="HOGENOM" id="CLU_098841_0_1_5"/>
<dbReference type="Proteomes" id="UP000006832">
    <property type="component" value="Chromosome"/>
</dbReference>
<dbReference type="GO" id="GO:0022625">
    <property type="term" value="C:cytosolic large ribosomal subunit"/>
    <property type="evidence" value="ECO:0007669"/>
    <property type="project" value="TreeGrafter"/>
</dbReference>
<dbReference type="GO" id="GO:0008097">
    <property type="term" value="F:5S rRNA binding"/>
    <property type="evidence" value="ECO:0007669"/>
    <property type="project" value="TreeGrafter"/>
</dbReference>
<dbReference type="GO" id="GO:0003735">
    <property type="term" value="F:structural constituent of ribosome"/>
    <property type="evidence" value="ECO:0007669"/>
    <property type="project" value="InterPro"/>
</dbReference>
<dbReference type="GO" id="GO:0006412">
    <property type="term" value="P:translation"/>
    <property type="evidence" value="ECO:0007669"/>
    <property type="project" value="UniProtKB-UniRule"/>
</dbReference>
<dbReference type="CDD" id="cd00432">
    <property type="entry name" value="Ribosomal_L18_L5e"/>
    <property type="match status" value="1"/>
</dbReference>
<dbReference type="FunFam" id="3.30.420.100:FF:000001">
    <property type="entry name" value="50S ribosomal protein L18"/>
    <property type="match status" value="1"/>
</dbReference>
<dbReference type="Gene3D" id="3.30.420.100">
    <property type="match status" value="1"/>
</dbReference>
<dbReference type="HAMAP" id="MF_01337_B">
    <property type="entry name" value="Ribosomal_uL18_B"/>
    <property type="match status" value="1"/>
</dbReference>
<dbReference type="InterPro" id="IPR004389">
    <property type="entry name" value="Ribosomal_uL18_bac-type"/>
</dbReference>
<dbReference type="InterPro" id="IPR005484">
    <property type="entry name" value="Ribosomal_uL18_bac/euk"/>
</dbReference>
<dbReference type="NCBIfam" id="TIGR00060">
    <property type="entry name" value="L18_bact"/>
    <property type="match status" value="1"/>
</dbReference>
<dbReference type="PANTHER" id="PTHR12899">
    <property type="entry name" value="39S RIBOSOMAL PROTEIN L18, MITOCHONDRIAL"/>
    <property type="match status" value="1"/>
</dbReference>
<dbReference type="PANTHER" id="PTHR12899:SF3">
    <property type="entry name" value="LARGE RIBOSOMAL SUBUNIT PROTEIN UL18M"/>
    <property type="match status" value="1"/>
</dbReference>
<dbReference type="Pfam" id="PF00861">
    <property type="entry name" value="Ribosomal_L18p"/>
    <property type="match status" value="1"/>
</dbReference>
<dbReference type="SUPFAM" id="SSF53137">
    <property type="entry name" value="Translational machinery components"/>
    <property type="match status" value="1"/>
</dbReference>
<accession>A8GT53</accession>
<keyword id="KW-0687">Ribonucleoprotein</keyword>
<keyword id="KW-0689">Ribosomal protein</keyword>
<keyword id="KW-0694">RNA-binding</keyword>
<keyword id="KW-0699">rRNA-binding</keyword>
<proteinExistence type="inferred from homology"/>
<gene>
    <name evidence="1" type="primary">rplR</name>
    <name type="ordered locus">A1G_05475</name>
</gene>
<sequence>MRSAKLKFEKRRSRIRHKISKTSNRVRLSIFKSGRHIYAQIIDDSKSITIAAASTLDEKRKKSHCNIEHAIKVGEEIAKKAYAAGIKDVVFDRGGYKYHGVVKALADAAREKIKF</sequence>
<comment type="function">
    <text evidence="1">This is one of the proteins that bind and probably mediate the attachment of the 5S RNA into the large ribosomal subunit, where it forms part of the central protuberance.</text>
</comment>
<comment type="subunit">
    <text evidence="1">Part of the 50S ribosomal subunit; part of the 5S rRNA/L5/L18/L25 subcomplex. Contacts the 5S and 23S rRNAs.</text>
</comment>
<comment type="similarity">
    <text evidence="1">Belongs to the universal ribosomal protein uL18 family.</text>
</comment>
<feature type="chain" id="PRO_1000053101" description="Large ribosomal subunit protein uL18">
    <location>
        <begin position="1"/>
        <end position="115"/>
    </location>
</feature>